<feature type="signal peptide" evidence="3">
    <location>
        <begin position="1"/>
        <end position="44"/>
    </location>
</feature>
<feature type="chain" id="PRO_0000042010" description="Clumping factor B">
    <location>
        <begin position="45"/>
        <end position="841"/>
    </location>
</feature>
<feature type="propeptide" id="PRO_0000042011" description="Removed by sortase" evidence="4">
    <location>
        <begin position="842"/>
        <end position="877"/>
    </location>
</feature>
<feature type="region of interest" description="Disordered" evidence="5">
    <location>
        <begin position="44"/>
        <end position="192"/>
    </location>
</feature>
<feature type="region of interest" description="Ligand binding A region" evidence="1">
    <location>
        <begin position="45"/>
        <end position="542"/>
    </location>
</feature>
<feature type="region of interest" description="Disordered" evidence="5">
    <location>
        <begin position="530"/>
        <end position="849"/>
    </location>
</feature>
<feature type="short sequence motif" description="YSIRK-G/S signaling motif" evidence="2">
    <location>
        <begin position="15"/>
        <end position="26"/>
    </location>
</feature>
<feature type="short sequence motif" description="MIDAS-like motif">
    <location>
        <begin position="272"/>
        <end position="276"/>
    </location>
</feature>
<feature type="short sequence motif" description="LPXTG sorting signal" evidence="4">
    <location>
        <begin position="838"/>
        <end position="842"/>
    </location>
</feature>
<feature type="compositionally biased region" description="Polar residues" evidence="5">
    <location>
        <begin position="44"/>
        <end position="61"/>
    </location>
</feature>
<feature type="compositionally biased region" description="Polar residues" evidence="5">
    <location>
        <begin position="68"/>
        <end position="95"/>
    </location>
</feature>
<feature type="compositionally biased region" description="Low complexity" evidence="5">
    <location>
        <begin position="96"/>
        <end position="119"/>
    </location>
</feature>
<feature type="compositionally biased region" description="Polar residues" evidence="5">
    <location>
        <begin position="120"/>
        <end position="189"/>
    </location>
</feature>
<feature type="compositionally biased region" description="Pro residues" evidence="5">
    <location>
        <begin position="545"/>
        <end position="555"/>
    </location>
</feature>
<feature type="compositionally biased region" description="Acidic residues" evidence="5">
    <location>
        <begin position="556"/>
        <end position="801"/>
    </location>
</feature>
<feature type="compositionally biased region" description="Polar residues" evidence="5">
    <location>
        <begin position="805"/>
        <end position="816"/>
    </location>
</feature>
<feature type="compositionally biased region" description="Basic and acidic residues" evidence="5">
    <location>
        <begin position="833"/>
        <end position="846"/>
    </location>
</feature>
<feature type="site" description="Cleavage; by aureolysin" evidence="1">
    <location>
        <begin position="197"/>
        <end position="198"/>
    </location>
</feature>
<feature type="site" description="Cleavage; by aureolysin" evidence="1">
    <location>
        <begin position="199"/>
        <end position="200"/>
    </location>
</feature>
<feature type="modified residue" description="Pentaglycyl murein peptidoglycan amidated threonine" evidence="4">
    <location>
        <position position="841"/>
    </location>
</feature>
<feature type="helix" evidence="7">
    <location>
        <begin position="216"/>
        <end position="218"/>
    </location>
</feature>
<feature type="strand" evidence="7">
    <location>
        <begin position="219"/>
        <end position="227"/>
    </location>
</feature>
<feature type="strand" evidence="7">
    <location>
        <begin position="229"/>
        <end position="231"/>
    </location>
</feature>
<feature type="helix" evidence="7">
    <location>
        <begin position="233"/>
        <end position="235"/>
    </location>
</feature>
<feature type="strand" evidence="7">
    <location>
        <begin position="239"/>
        <end position="247"/>
    </location>
</feature>
<feature type="strand" evidence="7">
    <location>
        <begin position="256"/>
        <end position="260"/>
    </location>
</feature>
<feature type="strand" evidence="7">
    <location>
        <begin position="265"/>
        <end position="268"/>
    </location>
</feature>
<feature type="turn" evidence="7">
    <location>
        <begin position="274"/>
        <end position="278"/>
    </location>
</feature>
<feature type="strand" evidence="7">
    <location>
        <begin position="279"/>
        <end position="286"/>
    </location>
</feature>
<feature type="strand" evidence="7">
    <location>
        <begin position="292"/>
        <end position="299"/>
    </location>
</feature>
<feature type="turn" evidence="7">
    <location>
        <begin position="300"/>
        <end position="303"/>
    </location>
</feature>
<feature type="strand" evidence="7">
    <location>
        <begin position="304"/>
        <end position="309"/>
    </location>
</feature>
<feature type="helix" evidence="7">
    <location>
        <begin position="311"/>
        <end position="313"/>
    </location>
</feature>
<feature type="strand" evidence="7">
    <location>
        <begin position="320"/>
        <end position="329"/>
    </location>
</feature>
<feature type="turn" evidence="7">
    <location>
        <begin position="331"/>
        <end position="333"/>
    </location>
</feature>
<feature type="strand" evidence="7">
    <location>
        <begin position="336"/>
        <end position="341"/>
    </location>
</feature>
<feature type="strand" evidence="7">
    <location>
        <begin position="344"/>
        <end position="348"/>
    </location>
</feature>
<feature type="strand" evidence="7">
    <location>
        <begin position="354"/>
        <end position="357"/>
    </location>
</feature>
<feature type="strand" evidence="7">
    <location>
        <begin position="374"/>
        <end position="381"/>
    </location>
</feature>
<feature type="strand" evidence="7">
    <location>
        <begin position="384"/>
        <end position="387"/>
    </location>
</feature>
<feature type="strand" evidence="7">
    <location>
        <begin position="389"/>
        <end position="397"/>
    </location>
</feature>
<feature type="strand" evidence="7">
    <location>
        <begin position="403"/>
        <end position="415"/>
    </location>
</feature>
<feature type="helix" evidence="7">
    <location>
        <begin position="417"/>
        <end position="419"/>
    </location>
</feature>
<feature type="turn" evidence="7">
    <location>
        <begin position="426"/>
        <end position="428"/>
    </location>
</feature>
<feature type="strand" evidence="7">
    <location>
        <begin position="430"/>
        <end position="437"/>
    </location>
</feature>
<feature type="helix" evidence="7">
    <location>
        <begin position="439"/>
        <end position="441"/>
    </location>
</feature>
<feature type="strand" evidence="7">
    <location>
        <begin position="455"/>
        <end position="457"/>
    </location>
</feature>
<feature type="helix" evidence="7">
    <location>
        <begin position="460"/>
        <end position="462"/>
    </location>
</feature>
<feature type="strand" evidence="7">
    <location>
        <begin position="465"/>
        <end position="467"/>
    </location>
</feature>
<feature type="strand" evidence="7">
    <location>
        <begin position="473"/>
        <end position="481"/>
    </location>
</feature>
<feature type="strand" evidence="7">
    <location>
        <begin position="485"/>
        <end position="493"/>
    </location>
</feature>
<feature type="strand" evidence="7">
    <location>
        <begin position="500"/>
        <end position="509"/>
    </location>
</feature>
<feature type="turn" evidence="7">
    <location>
        <begin position="511"/>
        <end position="513"/>
    </location>
</feature>
<feature type="strand" evidence="7">
    <location>
        <begin position="518"/>
        <end position="526"/>
    </location>
</feature>
<organism>
    <name type="scientific">Staphylococcus aureus (strain N315)</name>
    <dbReference type="NCBI Taxonomy" id="158879"/>
    <lineage>
        <taxon>Bacteria</taxon>
        <taxon>Bacillati</taxon>
        <taxon>Bacillota</taxon>
        <taxon>Bacilli</taxon>
        <taxon>Bacillales</taxon>
        <taxon>Staphylococcaceae</taxon>
        <taxon>Staphylococcus</taxon>
    </lineage>
</organism>
<gene>
    <name type="primary">clfB</name>
    <name type="ordered locus">SA2423</name>
</gene>
<proteinExistence type="evidence at protein level"/>
<name>CLFB_STAAN</name>
<evidence type="ECO:0000250" key="1"/>
<evidence type="ECO:0000250" key="2">
    <source>
        <dbReference type="UniProtKB" id="Q2FUY2"/>
    </source>
</evidence>
<evidence type="ECO:0000255" key="3"/>
<evidence type="ECO:0000255" key="4">
    <source>
        <dbReference type="PROSITE-ProRule" id="PRU00477"/>
    </source>
</evidence>
<evidence type="ECO:0000256" key="5">
    <source>
        <dbReference type="SAM" id="MobiDB-lite"/>
    </source>
</evidence>
<evidence type="ECO:0000305" key="6"/>
<evidence type="ECO:0007829" key="7">
    <source>
        <dbReference type="PDB" id="3AU0"/>
    </source>
</evidence>
<comment type="function">
    <text evidence="1">Cell surface-associated protein implicated in virulence by promoting bacterial attachment to both alpha- and beta-chains of human fibrinogen and inducing the formation of bacterial clumps.</text>
</comment>
<comment type="subcellular location">
    <subcellularLocation>
        <location evidence="4">Secreted</location>
        <location evidence="4">Cell wall</location>
        <topology evidence="4">Peptidoglycan-anchor</topology>
    </subcellularLocation>
    <text evidence="2">Anchored to the cell wall by sortase A (By similarity).</text>
</comment>
<comment type="domain">
    <text evidence="1">The Asp/Ser-rich domain functions as a stalk to allow the ligand binding domain to be displayed in a functional form on the cell surface.</text>
</comment>
<comment type="PTM">
    <text evidence="1">Proteolytically cleaved by aureolysin (aur). This cleavage leads to the inactivation of ClfB (By similarity).</text>
</comment>
<comment type="similarity">
    <text evidence="6">Belongs to the serine-aspartate repeat-containing protein (SDr) family.</text>
</comment>
<protein>
    <recommendedName>
        <fullName>Clumping factor B</fullName>
    </recommendedName>
    <alternativeName>
        <fullName>Fibrinogen receptor B</fullName>
    </alternativeName>
    <alternativeName>
        <fullName>Fibrinogen-binding protein B</fullName>
    </alternativeName>
</protein>
<keyword id="KW-0002">3D-structure</keyword>
<keyword id="KW-0134">Cell wall</keyword>
<keyword id="KW-0572">Peptidoglycan-anchor</keyword>
<keyword id="KW-0964">Secreted</keyword>
<keyword id="KW-0732">Signal</keyword>
<keyword id="KW-0843">Virulence</keyword>
<accession>Q7A382</accession>
<dbReference type="EMBL" id="BA000018">
    <property type="protein sequence ID" value="BAB43728.1"/>
    <property type="molecule type" value="Genomic_DNA"/>
</dbReference>
<dbReference type="PIR" id="F90070">
    <property type="entry name" value="F90070"/>
</dbReference>
<dbReference type="RefSeq" id="WP_000745891.1">
    <property type="nucleotide sequence ID" value="NC_002745.2"/>
</dbReference>
<dbReference type="PDB" id="3ASW">
    <property type="method" value="X-ray"/>
    <property type="resolution" value="2.60 A"/>
    <property type="chains" value="A=212-531"/>
</dbReference>
<dbReference type="PDB" id="3AT0">
    <property type="method" value="X-ray"/>
    <property type="resolution" value="2.50 A"/>
    <property type="chains" value="A=212-541"/>
</dbReference>
<dbReference type="PDB" id="3AU0">
    <property type="method" value="X-ray"/>
    <property type="resolution" value="2.45 A"/>
    <property type="chains" value="A=203-541"/>
</dbReference>
<dbReference type="PDBsum" id="3ASW"/>
<dbReference type="PDBsum" id="3AT0"/>
<dbReference type="PDBsum" id="3AU0"/>
<dbReference type="SMR" id="Q7A382"/>
<dbReference type="EnsemblBacteria" id="BAB43728">
    <property type="protein sequence ID" value="BAB43728"/>
    <property type="gene ID" value="BAB43728"/>
</dbReference>
<dbReference type="KEGG" id="sau:SA2423"/>
<dbReference type="HOGENOM" id="CLU_004137_2_0_9"/>
<dbReference type="EvolutionaryTrace" id="Q7A382"/>
<dbReference type="PRO" id="PR:Q7A382"/>
<dbReference type="GO" id="GO:0005576">
    <property type="term" value="C:extracellular region"/>
    <property type="evidence" value="ECO:0007669"/>
    <property type="project" value="UniProtKB-KW"/>
</dbReference>
<dbReference type="GO" id="GO:0007155">
    <property type="term" value="P:cell adhesion"/>
    <property type="evidence" value="ECO:0007669"/>
    <property type="project" value="InterPro"/>
</dbReference>
<dbReference type="Gene3D" id="2.60.40.1280">
    <property type="match status" value="1"/>
</dbReference>
<dbReference type="Gene3D" id="2.60.40.1290">
    <property type="match status" value="1"/>
</dbReference>
<dbReference type="InterPro" id="IPR011266">
    <property type="entry name" value="Adhesin_Fg-bd_dom_2"/>
</dbReference>
<dbReference type="InterPro" id="IPR008966">
    <property type="entry name" value="Adhesion_dom_sf"/>
</dbReference>
<dbReference type="InterPro" id="IPR011252">
    <property type="entry name" value="Fibrogen-bd_dom1"/>
</dbReference>
<dbReference type="InterPro" id="IPR019931">
    <property type="entry name" value="LPXTG_anchor"/>
</dbReference>
<dbReference type="InterPro" id="IPR050972">
    <property type="entry name" value="SDr-like"/>
</dbReference>
<dbReference type="InterPro" id="IPR041171">
    <property type="entry name" value="SDR_Ig"/>
</dbReference>
<dbReference type="InterPro" id="IPR005877">
    <property type="entry name" value="YSIRK_signal_dom"/>
</dbReference>
<dbReference type="NCBIfam" id="TIGR01167">
    <property type="entry name" value="LPXTG_anchor"/>
    <property type="match status" value="1"/>
</dbReference>
<dbReference type="NCBIfam" id="NF033845">
    <property type="entry name" value="MSCRAMM_ClfB"/>
    <property type="match status" value="1"/>
</dbReference>
<dbReference type="NCBIfam" id="TIGR01168">
    <property type="entry name" value="YSIRK_signal"/>
    <property type="match status" value="1"/>
</dbReference>
<dbReference type="PANTHER" id="PTHR34403">
    <property type="entry name" value="TOL-PAL SYSTEM PROTEIN TOLA"/>
    <property type="match status" value="1"/>
</dbReference>
<dbReference type="PANTHER" id="PTHR34403:SF8">
    <property type="entry name" value="TOL-PAL SYSTEM PROTEIN TOLA"/>
    <property type="match status" value="1"/>
</dbReference>
<dbReference type="Pfam" id="PF17961">
    <property type="entry name" value="Big_8"/>
    <property type="match status" value="1"/>
</dbReference>
<dbReference type="Pfam" id="PF00746">
    <property type="entry name" value="Gram_pos_anchor"/>
    <property type="match status" value="1"/>
</dbReference>
<dbReference type="Pfam" id="PF10425">
    <property type="entry name" value="SdrG_C_C"/>
    <property type="match status" value="1"/>
</dbReference>
<dbReference type="Pfam" id="PF04650">
    <property type="entry name" value="YSIRK_signal"/>
    <property type="match status" value="1"/>
</dbReference>
<dbReference type="SUPFAM" id="SSF49401">
    <property type="entry name" value="Bacterial adhesins"/>
    <property type="match status" value="2"/>
</dbReference>
<dbReference type="PROSITE" id="PS50847">
    <property type="entry name" value="GRAM_POS_ANCHORING"/>
    <property type="match status" value="1"/>
</dbReference>
<reference key="1">
    <citation type="journal article" date="2001" name="Lancet">
        <title>Whole genome sequencing of meticillin-resistant Staphylococcus aureus.</title>
        <authorList>
            <person name="Kuroda M."/>
            <person name="Ohta T."/>
            <person name="Uchiyama I."/>
            <person name="Baba T."/>
            <person name="Yuzawa H."/>
            <person name="Kobayashi I."/>
            <person name="Cui L."/>
            <person name="Oguchi A."/>
            <person name="Aoki K."/>
            <person name="Nagai Y."/>
            <person name="Lian J.-Q."/>
            <person name="Ito T."/>
            <person name="Kanamori M."/>
            <person name="Matsumaru H."/>
            <person name="Maruyama A."/>
            <person name="Murakami H."/>
            <person name="Hosoyama A."/>
            <person name="Mizutani-Ui Y."/>
            <person name="Takahashi N.K."/>
            <person name="Sawano T."/>
            <person name="Inoue R."/>
            <person name="Kaito C."/>
            <person name="Sekimizu K."/>
            <person name="Hirakawa H."/>
            <person name="Kuhara S."/>
            <person name="Goto S."/>
            <person name="Yabuzaki J."/>
            <person name="Kanehisa M."/>
            <person name="Yamashita A."/>
            <person name="Oshima K."/>
            <person name="Furuya K."/>
            <person name="Yoshino C."/>
            <person name="Shiba T."/>
            <person name="Hattori M."/>
            <person name="Ogasawara N."/>
            <person name="Hayashi H."/>
            <person name="Hiramatsu K."/>
        </authorList>
    </citation>
    <scope>NUCLEOTIDE SEQUENCE [LARGE SCALE GENOMIC DNA]</scope>
    <source>
        <strain>N315</strain>
    </source>
</reference>
<sequence length="877" mass="93651">MKKRIDYLSNKQNKYSIRRFTVGTTSVIVGATILFGIGNHQAQASEQSNDTTQSSKNNASADSEKNNMIETPQLNTTANDTSDISANTNSANVDSTTKPMSTQTSNTTTTEPASTNETPQPTAIKNQATAAKMQDQTVPQEANSQVDNKTTNDANSIATNSELKNSQTLDLPQSSPQTISNAQGTSKPSVRTRAVRSLAVAEPVVNAADAKGTNVNDKVTASNFKLEKTTFDPNQSGNTFMAANFTVTDKVKSGDYFTAKLPDSLTGNGDVDYSNSNNTMPIADIKSTNGDVVAKATYDILTKTYTFVFTDYVNNKENINGQFSLPLFTDRAKAPKSGTYDANINIADEMFNNKITYNYSSPIAGIDKPNGANISSQIIGVDTASGQNTYKQTVFVNPKQRVLGNTWVYIKGYQDKIEESSGKVSATDTKLRIFEVNDTSKLSDSYYADPNDSNLKEVTDQFKNRIYYEHPNVASIKFGDITKTYVVLVEGHYDNTGKNLKTQVIQENVDPVTNRDYSIFGWNNENVVRYGGGSADGDSAVNPKDPTPGPPVDPEPSPDPEPEPTPDPEPSPDPEPEPSPDPDPDSDSDSDSGSDSDSGSDSDSESDSDSDSDSDSDSDSDSESDSDSESDSDSDSDSDSDSDSDSESDSDSDSDSDSDSDSDSESDSDSESDSESDSDSDSDSDSDSDSDSDSDSDSDSDSDSDSDSDSDSESDSDSDSDSDSDSDSDSDSDSDSDSDSDSDSDSDSDSDSDSDSDSDSDSDSDSDSDSDSDSDSDSDSDSDSDSDSDSDSDSDSDSDSDSDSRVTPPNNEQKAPSNPKGEVNHSNKVSKQHKTDALPETGDKSENTNATLFGAMMALLGSLLLFRKRKQDHKEKA</sequence>